<proteinExistence type="evidence at protein level"/>
<gene>
    <name type="primary">PTPN9</name>
</gene>
<accession>P43378</accession>
<accession>Q53XR9</accession>
<reference key="1">
    <citation type="journal article" date="1992" name="Proc. Natl. Acad. Sci. U.S.A.">
        <title>Cloning and expression of a cytosolic megakaryocyte protein-tyrosine-phosphatase with sequence homology to retinaldehyde-binding protein and yeast SEC14p.</title>
        <authorList>
            <person name="Gu M."/>
            <person name="Warshawsky I."/>
            <person name="Majerus P.W."/>
        </authorList>
    </citation>
    <scope>NUCLEOTIDE SEQUENCE [MRNA]</scope>
    <source>
        <tissue>Placenta</tissue>
    </source>
</reference>
<reference key="2">
    <citation type="submission" date="2003-05" db="EMBL/GenBank/DDBJ databases">
        <title>Cloning of human full-length CDSs in BD Creator(TM) system donor vector.</title>
        <authorList>
            <person name="Kalnine N."/>
            <person name="Chen X."/>
            <person name="Rolfs A."/>
            <person name="Halleck A."/>
            <person name="Hines L."/>
            <person name="Eisenstein S."/>
            <person name="Koundinya M."/>
            <person name="Raphael J."/>
            <person name="Moreira D."/>
            <person name="Kelley T."/>
            <person name="LaBaer J."/>
            <person name="Lin Y."/>
            <person name="Phelan M."/>
            <person name="Farmer A."/>
        </authorList>
    </citation>
    <scope>NUCLEOTIDE SEQUENCE [LARGE SCALE MRNA]</scope>
</reference>
<reference key="3">
    <citation type="journal article" date="2004" name="Genome Res.">
        <title>The status, quality, and expansion of the NIH full-length cDNA project: the Mammalian Gene Collection (MGC).</title>
        <authorList>
            <consortium name="The MGC Project Team"/>
        </authorList>
    </citation>
    <scope>NUCLEOTIDE SEQUENCE [LARGE SCALE MRNA]</scope>
    <source>
        <tissue>Pancreas</tissue>
    </source>
</reference>
<reference key="4">
    <citation type="journal article" date="2008" name="Proc. Natl. Acad. Sci. U.S.A.">
        <title>A quantitative atlas of mitotic phosphorylation.</title>
        <authorList>
            <person name="Dephoure N."/>
            <person name="Zhou C."/>
            <person name="Villen J."/>
            <person name="Beausoleil S.A."/>
            <person name="Bakalarski C.E."/>
            <person name="Elledge S.J."/>
            <person name="Gygi S.P."/>
        </authorList>
    </citation>
    <scope>IDENTIFICATION BY MASS SPECTROMETRY [LARGE SCALE ANALYSIS]</scope>
    <source>
        <tissue>Cervix carcinoma</tissue>
    </source>
</reference>
<reference key="5">
    <citation type="journal article" date="2009" name="Anal. Chem.">
        <title>Lys-N and trypsin cover complementary parts of the phosphoproteome in a refined SCX-based approach.</title>
        <authorList>
            <person name="Gauci S."/>
            <person name="Helbig A.O."/>
            <person name="Slijper M."/>
            <person name="Krijgsveld J."/>
            <person name="Heck A.J."/>
            <person name="Mohammed S."/>
        </authorList>
    </citation>
    <scope>ACETYLATION [LARGE SCALE ANALYSIS] AT MET-1</scope>
    <scope>IDENTIFICATION BY MASS SPECTROMETRY [LARGE SCALE ANALYSIS]</scope>
</reference>
<reference key="6">
    <citation type="journal article" date="2011" name="BMC Syst. Biol.">
        <title>Initial characterization of the human central proteome.</title>
        <authorList>
            <person name="Burkard T.R."/>
            <person name="Planyavsky M."/>
            <person name="Kaupe I."/>
            <person name="Breitwieser F.P."/>
            <person name="Buerckstuemmer T."/>
            <person name="Bennett K.L."/>
            <person name="Superti-Furga G."/>
            <person name="Colinge J."/>
        </authorList>
    </citation>
    <scope>IDENTIFICATION BY MASS SPECTROMETRY [LARGE SCALE ANALYSIS]</scope>
</reference>
<reference key="7">
    <citation type="journal article" date="2013" name="J. Proteome Res.">
        <title>Toward a comprehensive characterization of a human cancer cell phosphoproteome.</title>
        <authorList>
            <person name="Zhou H."/>
            <person name="Di Palma S."/>
            <person name="Preisinger C."/>
            <person name="Peng M."/>
            <person name="Polat A.N."/>
            <person name="Heck A.J."/>
            <person name="Mohammed S."/>
        </authorList>
    </citation>
    <scope>IDENTIFICATION BY MASS SPECTROMETRY [LARGE SCALE ANALYSIS]</scope>
    <source>
        <tissue>Erythroleukemia</tissue>
    </source>
</reference>
<reference key="8">
    <citation type="journal article" date="2009" name="Cell">
        <title>Large-scale structural analysis of the classical human protein tyrosine phosphatome.</title>
        <authorList>
            <person name="Barr A.J."/>
            <person name="Ugochukwu E."/>
            <person name="Lee W.H."/>
            <person name="King O.N.F."/>
            <person name="Filippakopoulos P."/>
            <person name="Alfano I."/>
            <person name="Savitsky P."/>
            <person name="Burgess-Brown N.A."/>
            <person name="Mueller S."/>
            <person name="Knapp S."/>
        </authorList>
    </citation>
    <scope>X-RAY CRYSTALLOGRAPHY (1.6 ANGSTROMS) OF 277-582</scope>
    <scope>FUNCTION</scope>
</reference>
<evidence type="ECO:0000250" key="1"/>
<evidence type="ECO:0000255" key="2">
    <source>
        <dbReference type="PROSITE-ProRule" id="PRU00056"/>
    </source>
</evidence>
<evidence type="ECO:0000255" key="3">
    <source>
        <dbReference type="PROSITE-ProRule" id="PRU00160"/>
    </source>
</evidence>
<evidence type="ECO:0000255" key="4">
    <source>
        <dbReference type="PROSITE-ProRule" id="PRU10044"/>
    </source>
</evidence>
<evidence type="ECO:0000256" key="5">
    <source>
        <dbReference type="SAM" id="MobiDB-lite"/>
    </source>
</evidence>
<evidence type="ECO:0000269" key="6">
    <source>
    </source>
</evidence>
<evidence type="ECO:0000305" key="7"/>
<evidence type="ECO:0007744" key="8">
    <source>
    </source>
</evidence>
<evidence type="ECO:0007829" key="9">
    <source>
        <dbReference type="PDB" id="2PA5"/>
    </source>
</evidence>
<evidence type="ECO:0007829" key="10">
    <source>
        <dbReference type="PDB" id="4GE6"/>
    </source>
</evidence>
<evidence type="ECO:0007829" key="11">
    <source>
        <dbReference type="PDB" id="6KZQ"/>
    </source>
</evidence>
<sequence length="593" mass="68020">MEPATAPRPDMAPELTPEEEQATKQFLEEINKWTVQYNVSPLSWNVAVKFLMARKFDVLRAIELFHSYRETRRKEGIVKLKPHEEPLRSEILSGKFTILNVRDPTGASIALFTARLHHPHKSVQHVVLQALFYLLDRAVDSFETQRNGLVFIYDMCGSNYANFELDLGKKVLNLLKGAFPARLKKVLIVGAPIWFRVPYSIISLLLKDKVRERIQILKTSEVTQHLPRECLPENLGGYVKIDLATWNFQFLPQVNGHPDPFDEIILFSLPPALDWDSVHVPGPHAMTIQELVDYVNARQKQGIYEEYEDIRRENPVGTFHCSMSPGNLEKNRYGDVPCLDQTRVKLTKRSGHTQTDYINASFMDGYKQKNAYIGTQGPLENTYRDFWLMVWEQKVLVIVMTTRFEEGGRRKCGQYWPLEKDSRIRFGFLTVTNLGVENMNHYKKTTLEIHNTEERQKRQVTHFQFLSWPDYGVPSSAASLIDFLRVVRNQQSLAVSNMGARSKGQCPEPPIVVHCSAGIGRTGTFCSLDICLAQLEELGTLNVFQTVSRMRTQRAFSIQTPEQYYFCYKAILEFAEKEGMVSSGQNLLAVESQ</sequence>
<name>PTN9_HUMAN</name>
<feature type="chain" id="PRO_0000094764" description="Tyrosine-protein phosphatase non-receptor type 9">
    <location>
        <begin position="1"/>
        <end position="593"/>
    </location>
</feature>
<feature type="domain" description="CRAL-TRIO" evidence="2">
    <location>
        <begin position="84"/>
        <end position="243"/>
    </location>
</feature>
<feature type="domain" description="Tyrosine-protein phosphatase" evidence="3">
    <location>
        <begin position="303"/>
        <end position="574"/>
    </location>
</feature>
<feature type="region of interest" description="Disordered" evidence="5">
    <location>
        <begin position="1"/>
        <end position="21"/>
    </location>
</feature>
<feature type="active site" description="Phosphocysteine intermediate" evidence="3 4">
    <location>
        <position position="515"/>
    </location>
</feature>
<feature type="binding site" evidence="1">
    <location>
        <position position="470"/>
    </location>
    <ligand>
        <name>substrate</name>
    </ligand>
</feature>
<feature type="binding site" evidence="1">
    <location>
        <begin position="515"/>
        <end position="521"/>
    </location>
    <ligand>
        <name>substrate</name>
    </ligand>
</feature>
<feature type="binding site" evidence="1">
    <location>
        <position position="559"/>
    </location>
    <ligand>
        <name>substrate</name>
    </ligand>
</feature>
<feature type="modified residue" description="N-acetylmethionine" evidence="8">
    <location>
        <position position="1"/>
    </location>
</feature>
<feature type="helix" evidence="10">
    <location>
        <begin position="288"/>
        <end position="312"/>
    </location>
</feature>
<feature type="helix" evidence="10">
    <location>
        <begin position="320"/>
        <end position="323"/>
    </location>
</feature>
<feature type="turn" evidence="10">
    <location>
        <begin position="325"/>
        <end position="327"/>
    </location>
</feature>
<feature type="helix" evidence="10">
    <location>
        <begin position="328"/>
        <end position="330"/>
    </location>
</feature>
<feature type="turn" evidence="10">
    <location>
        <begin position="340"/>
        <end position="342"/>
    </location>
</feature>
<feature type="strand" evidence="9">
    <location>
        <begin position="343"/>
        <end position="345"/>
    </location>
</feature>
<feature type="strand" evidence="10">
    <location>
        <begin position="350"/>
        <end position="352"/>
    </location>
</feature>
<feature type="strand" evidence="10">
    <location>
        <begin position="359"/>
        <end position="365"/>
    </location>
</feature>
<feature type="strand" evidence="10">
    <location>
        <begin position="368"/>
        <end position="375"/>
    </location>
</feature>
<feature type="helix" evidence="10">
    <location>
        <begin position="380"/>
        <end position="382"/>
    </location>
</feature>
<feature type="helix" evidence="10">
    <location>
        <begin position="383"/>
        <end position="392"/>
    </location>
</feature>
<feature type="strand" evidence="10">
    <location>
        <begin position="397"/>
        <end position="400"/>
    </location>
</feature>
<feature type="strand" evidence="10">
    <location>
        <begin position="404"/>
        <end position="406"/>
    </location>
</feature>
<feature type="strand" evidence="10">
    <location>
        <begin position="423"/>
        <end position="426"/>
    </location>
</feature>
<feature type="strand" evidence="10">
    <location>
        <begin position="429"/>
        <end position="438"/>
    </location>
</feature>
<feature type="strand" evidence="10">
    <location>
        <begin position="440"/>
        <end position="451"/>
    </location>
</feature>
<feature type="turn" evidence="10">
    <location>
        <begin position="452"/>
        <end position="455"/>
    </location>
</feature>
<feature type="strand" evidence="10">
    <location>
        <begin position="456"/>
        <end position="465"/>
    </location>
</feature>
<feature type="strand" evidence="10">
    <location>
        <begin position="470"/>
        <end position="472"/>
    </location>
</feature>
<feature type="helix" evidence="10">
    <location>
        <begin position="478"/>
        <end position="497"/>
    </location>
</feature>
<feature type="strand" evidence="10">
    <location>
        <begin position="511"/>
        <end position="514"/>
    </location>
</feature>
<feature type="strand" evidence="10">
    <location>
        <begin position="516"/>
        <end position="519"/>
    </location>
</feature>
<feature type="helix" evidence="10">
    <location>
        <begin position="520"/>
        <end position="538"/>
    </location>
</feature>
<feature type="strand" evidence="11">
    <location>
        <begin position="539"/>
        <end position="541"/>
    </location>
</feature>
<feature type="helix" evidence="10">
    <location>
        <begin position="543"/>
        <end position="550"/>
    </location>
</feature>
<feature type="turn" evidence="10">
    <location>
        <begin position="551"/>
        <end position="553"/>
    </location>
</feature>
<feature type="helix" evidence="10">
    <location>
        <begin position="561"/>
        <end position="577"/>
    </location>
</feature>
<protein>
    <recommendedName>
        <fullName>Tyrosine-protein phosphatase non-receptor type 9</fullName>
        <ecNumber>3.1.3.48</ecNumber>
    </recommendedName>
    <alternativeName>
        <fullName>Protein-tyrosine phosphatase MEG2</fullName>
        <shortName>PTPase MEG2</shortName>
    </alternativeName>
</protein>
<organism>
    <name type="scientific">Homo sapiens</name>
    <name type="common">Human</name>
    <dbReference type="NCBI Taxonomy" id="9606"/>
    <lineage>
        <taxon>Eukaryota</taxon>
        <taxon>Metazoa</taxon>
        <taxon>Chordata</taxon>
        <taxon>Craniata</taxon>
        <taxon>Vertebrata</taxon>
        <taxon>Euteleostomi</taxon>
        <taxon>Mammalia</taxon>
        <taxon>Eutheria</taxon>
        <taxon>Euarchontoglires</taxon>
        <taxon>Primates</taxon>
        <taxon>Haplorrhini</taxon>
        <taxon>Catarrhini</taxon>
        <taxon>Hominidae</taxon>
        <taxon>Homo</taxon>
    </lineage>
</organism>
<keyword id="KW-0002">3D-structure</keyword>
<keyword id="KW-0007">Acetylation</keyword>
<keyword id="KW-0963">Cytoplasm</keyword>
<keyword id="KW-0378">Hydrolase</keyword>
<keyword id="KW-0904">Protein phosphatase</keyword>
<keyword id="KW-1267">Proteomics identification</keyword>
<keyword id="KW-1185">Reference proteome</keyword>
<comment type="function">
    <text evidence="6">Protein-tyrosine phosphatase that could participate in the transfer of hydrophobic ligands or in functions of the Golgi apparatus.</text>
</comment>
<comment type="catalytic activity">
    <reaction evidence="4">
        <text>O-phospho-L-tyrosyl-[protein] + H2O = L-tyrosyl-[protein] + phosphate</text>
        <dbReference type="Rhea" id="RHEA:10684"/>
        <dbReference type="Rhea" id="RHEA-COMP:10136"/>
        <dbReference type="Rhea" id="RHEA-COMP:20101"/>
        <dbReference type="ChEBI" id="CHEBI:15377"/>
        <dbReference type="ChEBI" id="CHEBI:43474"/>
        <dbReference type="ChEBI" id="CHEBI:46858"/>
        <dbReference type="ChEBI" id="CHEBI:61978"/>
        <dbReference type="EC" id="3.1.3.48"/>
    </reaction>
</comment>
<comment type="interaction">
    <interactant intactId="EBI-742898">
        <id>P43378</id>
    </interactant>
    <interactant intactId="EBI-741181">
        <id>Q6RW13</id>
        <label>AGTRAP</label>
    </interactant>
    <organismsDiffer>false</organismsDiffer>
    <experiments>5</experiments>
</comment>
<comment type="interaction">
    <interactant intactId="EBI-742898">
        <id>P43378</id>
    </interactant>
    <interactant intactId="EBI-11522760">
        <id>Q6RW13-2</id>
        <label>AGTRAP</label>
    </interactant>
    <organismsDiffer>false</organismsDiffer>
    <experiments>3</experiments>
</comment>
<comment type="interaction">
    <interactant intactId="EBI-742898">
        <id>P43378</id>
    </interactant>
    <interactant intactId="EBI-13059134">
        <id>Q13520</id>
        <label>AQP6</label>
    </interactant>
    <organismsDiffer>false</organismsDiffer>
    <experiments>3</experiments>
</comment>
<comment type="interaction">
    <interactant intactId="EBI-742898">
        <id>P43378</id>
    </interactant>
    <interactant intactId="EBI-11343438">
        <id>Q3SXY8</id>
        <label>ARL13B</label>
    </interactant>
    <organismsDiffer>false</organismsDiffer>
    <experiments>3</experiments>
</comment>
<comment type="interaction">
    <interactant intactId="EBI-742898">
        <id>P43378</id>
    </interactant>
    <interactant intactId="EBI-714543">
        <id>Q15041</id>
        <label>ARL6IP1</label>
    </interactant>
    <organismsDiffer>false</organismsDiffer>
    <experiments>3</experiments>
</comment>
<comment type="interaction">
    <interactant intactId="EBI-742898">
        <id>P43378</id>
    </interactant>
    <interactant intactId="EBI-2606700">
        <id>P18859</id>
        <label>ATP5PF</label>
    </interactant>
    <organismsDiffer>false</organismsDiffer>
    <experiments>3</experiments>
</comment>
<comment type="interaction">
    <interactant intactId="EBI-742898">
        <id>P43378</id>
    </interactant>
    <interactant intactId="EBI-7996695">
        <id>Q8WZ55</id>
        <label>BSND</label>
    </interactant>
    <organismsDiffer>false</organismsDiffer>
    <experiments>3</experiments>
</comment>
<comment type="interaction">
    <interactant intactId="EBI-742898">
        <id>P43378</id>
    </interactant>
    <interactant intactId="EBI-2836538">
        <id>P51861</id>
        <label>CDR1</label>
    </interactant>
    <organismsDiffer>false</organismsDiffer>
    <experiments>3</experiments>
</comment>
<comment type="interaction">
    <interactant intactId="EBI-742898">
        <id>P43378</id>
    </interactant>
    <interactant intactId="EBI-2622997">
        <id>Q9HA82</id>
        <label>CERS4</label>
    </interactant>
    <organismsDiffer>false</organismsDiffer>
    <experiments>3</experiments>
</comment>
<comment type="interaction">
    <interactant intactId="EBI-742898">
        <id>P43378</id>
    </interactant>
    <interactant intactId="EBI-17278014">
        <id>Q8IZR5-2</id>
        <label>CMTM4</label>
    </interactant>
    <organismsDiffer>false</organismsDiffer>
    <experiments>3</experiments>
</comment>
<comment type="interaction">
    <interactant intactId="EBI-742898">
        <id>P43378</id>
    </interactant>
    <interactant intactId="EBI-2548702">
        <id>Q96DZ9</id>
        <label>CMTM5</label>
    </interactant>
    <organismsDiffer>false</organismsDiffer>
    <experiments>4</experiments>
</comment>
<comment type="interaction">
    <interactant intactId="EBI-742898">
        <id>P43378</id>
    </interactant>
    <interactant intactId="EBI-11522780">
        <id>Q96DZ9-2</id>
        <label>CMTM5</label>
    </interactant>
    <organismsDiffer>false</organismsDiffer>
    <experiments>3</experiments>
</comment>
<comment type="interaction">
    <interactant intactId="EBI-742898">
        <id>P43378</id>
    </interactant>
    <interactant intactId="EBI-10897372">
        <id>Q9NZJ6</id>
        <label>COQ3</label>
    </interactant>
    <organismsDiffer>false</organismsDiffer>
    <experiments>3</experiments>
</comment>
<comment type="interaction">
    <interactant intactId="EBI-742898">
        <id>P43378</id>
    </interactant>
    <interactant intactId="EBI-18013275">
        <id>Q7Z7G2</id>
        <label>CPLX4</label>
    </interactant>
    <organismsDiffer>false</organismsDiffer>
    <experiments>3</experiments>
</comment>
<comment type="interaction">
    <interactant intactId="EBI-742898">
        <id>P43378</id>
    </interactant>
    <interactant intactId="EBI-6942903">
        <id>Q96BA8</id>
        <label>CREB3L1</label>
    </interactant>
    <organismsDiffer>false</organismsDiffer>
    <experiments>3</experiments>
</comment>
<comment type="interaction">
    <interactant intactId="EBI-742898">
        <id>P43378</id>
    </interactant>
    <interactant intactId="EBI-7962814">
        <id>Q9GZP9</id>
        <label>DERL2</label>
    </interactant>
    <organismsDiffer>false</organismsDiffer>
    <experiments>3</experiments>
</comment>
<comment type="interaction">
    <interactant intactId="EBI-742898">
        <id>P43378</id>
    </interactant>
    <interactant intactId="EBI-3915253">
        <id>Q15125</id>
        <label>EBP</label>
    </interactant>
    <organismsDiffer>false</organismsDiffer>
    <experiments>3</experiments>
</comment>
<comment type="interaction">
    <interactant intactId="EBI-742898">
        <id>P43378</id>
    </interactant>
    <interactant intactId="EBI-10973142">
        <id>Q9NRY5</id>
        <label>FAM114A2</label>
    </interactant>
    <organismsDiffer>false</organismsDiffer>
    <experiments>3</experiments>
</comment>
<comment type="interaction">
    <interactant intactId="EBI-742898">
        <id>P43378</id>
    </interactant>
    <interactant intactId="EBI-3918971">
        <id>Q9Y680</id>
        <label>FKBP7</label>
    </interactant>
    <organismsDiffer>false</organismsDiffer>
    <experiments>3</experiments>
</comment>
<comment type="interaction">
    <interactant intactId="EBI-742898">
        <id>P43378</id>
    </interactant>
    <interactant intactId="EBI-18908258">
        <id>O00258</id>
        <label>GET1</label>
    </interactant>
    <organismsDiffer>false</organismsDiffer>
    <experiments>3</experiments>
</comment>
<comment type="interaction">
    <interactant intactId="EBI-742898">
        <id>P43378</id>
    </interactant>
    <interactant intactId="EBI-286316">
        <id>P10912</id>
        <label>GHR</label>
    </interactant>
    <organismsDiffer>false</organismsDiffer>
    <experiments>2</experiments>
</comment>
<comment type="interaction">
    <interactant intactId="EBI-742898">
        <id>P43378</id>
    </interactant>
    <interactant intactId="EBI-17565645">
        <id>P08034</id>
        <label>GJB1</label>
    </interactant>
    <organismsDiffer>false</organismsDiffer>
    <experiments>3</experiments>
</comment>
<comment type="interaction">
    <interactant intactId="EBI-742898">
        <id>P43378</id>
    </interactant>
    <interactant intactId="EBI-3917143">
        <id>Q5T7V8</id>
        <label>GORAB</label>
    </interactant>
    <organismsDiffer>false</organismsDiffer>
    <experiments>3</experiments>
</comment>
<comment type="interaction">
    <interactant intactId="EBI-742898">
        <id>P43378</id>
    </interactant>
    <interactant intactId="EBI-1052304">
        <id>Q8NBQ5</id>
        <label>HSD17B11</label>
    </interactant>
    <organismsDiffer>false</organismsDiffer>
    <experiments>3</experiments>
</comment>
<comment type="interaction">
    <interactant intactId="EBI-742898">
        <id>P43378</id>
    </interactant>
    <interactant intactId="EBI-18053395">
        <id>Q7Z5P4</id>
        <label>HSD17B13</label>
    </interactant>
    <organismsDiffer>false</organismsDiffer>
    <experiments>3</experiments>
</comment>
<comment type="interaction">
    <interactant intactId="EBI-742898">
        <id>P43378</id>
    </interactant>
    <interactant intactId="EBI-2830566">
        <id>Q9H400</id>
        <label>LIME1</label>
    </interactant>
    <organismsDiffer>false</organismsDiffer>
    <experiments>3</experiments>
</comment>
<comment type="interaction">
    <interactant intactId="EBI-742898">
        <id>P43378</id>
    </interactant>
    <interactant intactId="EBI-944295">
        <id>Q969L2</id>
        <label>MAL2</label>
    </interactant>
    <organismsDiffer>false</organismsDiffer>
    <experiments>4</experiments>
</comment>
<comment type="interaction">
    <interactant intactId="EBI-742898">
        <id>P43378</id>
    </interactant>
    <interactant intactId="EBI-712251">
        <id>P46459</id>
        <label>NSF</label>
    </interactant>
    <organismsDiffer>false</organismsDiffer>
    <experiments>2</experiments>
</comment>
<comment type="interaction">
    <interactant intactId="EBI-742898">
        <id>P43378</id>
    </interactant>
    <interactant intactId="EBI-741171">
        <id>Q96AL5</id>
        <label>PBX3</label>
    </interactant>
    <organismsDiffer>false</organismsDiffer>
    <experiments>3</experiments>
</comment>
<comment type="interaction">
    <interactant intactId="EBI-742898">
        <id>P43378</id>
    </interactant>
    <interactant intactId="EBI-594836">
        <id>O00623</id>
        <label>PEX12</label>
    </interactant>
    <organismsDiffer>false</organismsDiffer>
    <experiments>3</experiments>
</comment>
<comment type="interaction">
    <interactant intactId="EBI-742898">
        <id>P43378</id>
    </interactant>
    <interactant intactId="EBI-725795">
        <id>O60664</id>
        <label>PLIN3</label>
    </interactant>
    <organismsDiffer>false</organismsDiffer>
    <experiments>3</experiments>
</comment>
<comment type="interaction">
    <interactant intactId="EBI-742898">
        <id>P43378</id>
    </interactant>
    <interactant intactId="EBI-14065960">
        <id>Q96HR9-2</id>
        <label>REEP6</label>
    </interactant>
    <organismsDiffer>false</organismsDiffer>
    <experiments>3</experiments>
</comment>
<comment type="interaction">
    <interactant intactId="EBI-742898">
        <id>P43378</id>
    </interactant>
    <interactant intactId="EBI-740467">
        <id>O95197</id>
        <label>RTN3</label>
    </interactant>
    <organismsDiffer>false</organismsDiffer>
    <experiments>5</experiments>
</comment>
<comment type="interaction">
    <interactant intactId="EBI-742898">
        <id>P43378</id>
    </interactant>
    <interactant intactId="EBI-11525735">
        <id>O95197-3</id>
        <label>RTN3</label>
    </interactant>
    <organismsDiffer>false</organismsDiffer>
    <experiments>3</experiments>
</comment>
<comment type="interaction">
    <interactant intactId="EBI-742898">
        <id>P43378</id>
    </interactant>
    <interactant intactId="EBI-954338">
        <id>O15126</id>
        <label>SCAMP1</label>
    </interactant>
    <organismsDiffer>false</organismsDiffer>
    <experiments>3</experiments>
</comment>
<comment type="interaction">
    <interactant intactId="EBI-742898">
        <id>P43378</id>
    </interactant>
    <interactant intactId="EBI-12243266">
        <id>Q7RTY0</id>
        <label>SLC16A13</label>
    </interactant>
    <organismsDiffer>false</organismsDiffer>
    <experiments>3</experiments>
</comment>
<comment type="interaction">
    <interactant intactId="EBI-742898">
        <id>P43378</id>
    </interactant>
    <interactant intactId="EBI-10262251">
        <id>Q8IWU4</id>
        <label>SLC30A8</label>
    </interactant>
    <organismsDiffer>false</organismsDiffer>
    <experiments>3</experiments>
</comment>
<comment type="interaction">
    <interactant intactId="EBI-742898">
        <id>P43378</id>
    </interactant>
    <interactant intactId="EBI-4289564">
        <id>P30825</id>
        <label>SLC7A1</label>
    </interactant>
    <organismsDiffer>false</organismsDiffer>
    <experiments>3</experiments>
</comment>
<comment type="interaction">
    <interactant intactId="EBI-742898">
        <id>P43378</id>
    </interactant>
    <interactant intactId="EBI-10819434">
        <id>Q9NPE6</id>
        <label>SPAG4</label>
    </interactant>
    <organismsDiffer>false</organismsDiffer>
    <experiments>3</experiments>
</comment>
<comment type="interaction">
    <interactant intactId="EBI-742898">
        <id>P43378</id>
    </interactant>
    <interactant intactId="EBI-9071725">
        <id>P08247</id>
        <label>SYP</label>
    </interactant>
    <organismsDiffer>false</organismsDiffer>
    <experiments>3</experiments>
</comment>
<comment type="interaction">
    <interactant intactId="EBI-742898">
        <id>P43378</id>
    </interactant>
    <interactant intactId="EBI-12807858">
        <id>Q7Z6W1</id>
        <label>TMCO2</label>
    </interactant>
    <organismsDiffer>false</organismsDiffer>
    <experiments>3</experiments>
</comment>
<comment type="interaction">
    <interactant intactId="EBI-742898">
        <id>P43378</id>
    </interactant>
    <interactant intactId="EBI-11742770">
        <id>Q96HE8</id>
        <label>TMEM80</label>
    </interactant>
    <organismsDiffer>false</organismsDiffer>
    <experiments>3</experiments>
</comment>
<comment type="interaction">
    <interactant intactId="EBI-742898">
        <id>P43378</id>
    </interactant>
    <interactant intactId="EBI-2548832">
        <id>Q8N661</id>
        <label>TMEM86B</label>
    </interactant>
    <organismsDiffer>false</organismsDiffer>
    <experiments>3</experiments>
</comment>
<comment type="interaction">
    <interactant intactId="EBI-742898">
        <id>P43378</id>
    </interactant>
    <interactant intactId="EBI-6447886">
        <id>Q9Y320</id>
        <label>TMX2</label>
    </interactant>
    <organismsDiffer>false</organismsDiffer>
    <experiments>3</experiments>
</comment>
<comment type="interaction">
    <interactant intactId="EBI-742898">
        <id>P43378</id>
    </interactant>
    <interactant intactId="EBI-2799703">
        <id>O95070</id>
        <label>YIF1A</label>
    </interactant>
    <organismsDiffer>false</organismsDiffer>
    <experiments>3</experiments>
</comment>
<comment type="subcellular location">
    <subcellularLocation>
        <location evidence="7">Cytoplasm</location>
    </subcellularLocation>
</comment>
<comment type="similarity">
    <text evidence="7">Belongs to the protein-tyrosine phosphatase family. Non-receptor class 3 subfamily.</text>
</comment>
<dbReference type="EC" id="3.1.3.48"/>
<dbReference type="EMBL" id="M83738">
    <property type="protein sequence ID" value="AAA60226.1"/>
    <property type="molecule type" value="mRNA"/>
</dbReference>
<dbReference type="EMBL" id="BT007405">
    <property type="protein sequence ID" value="AAP36073.1"/>
    <property type="molecule type" value="mRNA"/>
</dbReference>
<dbReference type="EMBL" id="BC010863">
    <property type="protein sequence ID" value="AAH10863.1"/>
    <property type="molecule type" value="mRNA"/>
</dbReference>
<dbReference type="CCDS" id="CCDS10280.1"/>
<dbReference type="PIR" id="A42690">
    <property type="entry name" value="A42690"/>
</dbReference>
<dbReference type="RefSeq" id="NP_002824.1">
    <property type="nucleotide sequence ID" value="NM_002833.4"/>
</dbReference>
<dbReference type="PDB" id="2PA5">
    <property type="method" value="X-ray"/>
    <property type="resolution" value="1.60 A"/>
    <property type="chains" value="A/B=277-582"/>
</dbReference>
<dbReference type="PDB" id="4GE2">
    <property type="method" value="X-ray"/>
    <property type="resolution" value="1.80 A"/>
    <property type="chains" value="A/B=277-582"/>
</dbReference>
<dbReference type="PDB" id="4GE5">
    <property type="method" value="X-ray"/>
    <property type="resolution" value="2.00 A"/>
    <property type="chains" value="A/B=277-582"/>
</dbReference>
<dbReference type="PDB" id="4GE6">
    <property type="method" value="X-ray"/>
    <property type="resolution" value="1.40 A"/>
    <property type="chains" value="A/B=277-582"/>
</dbReference>
<dbReference type="PDB" id="4ICZ">
    <property type="method" value="X-ray"/>
    <property type="resolution" value="1.90 A"/>
    <property type="chains" value="A=277-582"/>
</dbReference>
<dbReference type="PDB" id="6KZQ">
    <property type="method" value="X-ray"/>
    <property type="resolution" value="1.70 A"/>
    <property type="chains" value="A=277-583"/>
</dbReference>
<dbReference type="PDB" id="6L03">
    <property type="method" value="X-ray"/>
    <property type="resolution" value="2.08 A"/>
    <property type="chains" value="A=277-583"/>
</dbReference>
<dbReference type="PDBsum" id="2PA5"/>
<dbReference type="PDBsum" id="4GE2"/>
<dbReference type="PDBsum" id="4GE5"/>
<dbReference type="PDBsum" id="4GE6"/>
<dbReference type="PDBsum" id="4ICZ"/>
<dbReference type="PDBsum" id="6KZQ"/>
<dbReference type="PDBsum" id="6L03"/>
<dbReference type="SMR" id="P43378"/>
<dbReference type="BioGRID" id="111744">
    <property type="interactions" value="113"/>
</dbReference>
<dbReference type="FunCoup" id="P43378">
    <property type="interactions" value="3092"/>
</dbReference>
<dbReference type="IntAct" id="P43378">
    <property type="interactions" value="59"/>
</dbReference>
<dbReference type="MINT" id="P43378"/>
<dbReference type="STRING" id="9606.ENSP00000482732"/>
<dbReference type="BindingDB" id="P43378"/>
<dbReference type="ChEMBL" id="CHEMBL6117"/>
<dbReference type="DEPOD" id="PTPN9"/>
<dbReference type="iPTMnet" id="P43378"/>
<dbReference type="MetOSite" id="P43378"/>
<dbReference type="PhosphoSitePlus" id="P43378"/>
<dbReference type="BioMuta" id="PTPN9"/>
<dbReference type="DMDM" id="1172724"/>
<dbReference type="jPOST" id="P43378"/>
<dbReference type="MassIVE" id="P43378"/>
<dbReference type="PaxDb" id="9606-ENSP00000482732"/>
<dbReference type="PeptideAtlas" id="P43378"/>
<dbReference type="ProteomicsDB" id="55630"/>
<dbReference type="Pumba" id="P43378"/>
<dbReference type="Antibodypedia" id="27331">
    <property type="antibodies" value="123 antibodies from 29 providers"/>
</dbReference>
<dbReference type="DNASU" id="5780"/>
<dbReference type="Ensembl" id="ENST00000618819.5">
    <property type="protein sequence ID" value="ENSP00000482732.1"/>
    <property type="gene ID" value="ENSG00000169410.11"/>
</dbReference>
<dbReference type="GeneID" id="5780"/>
<dbReference type="KEGG" id="hsa:5780"/>
<dbReference type="MANE-Select" id="ENST00000618819.5">
    <property type="protein sequence ID" value="ENSP00000482732.1"/>
    <property type="RefSeq nucleotide sequence ID" value="NM_002833.4"/>
    <property type="RefSeq protein sequence ID" value="NP_002824.1"/>
</dbReference>
<dbReference type="UCSC" id="uc002bal.5">
    <property type="organism name" value="human"/>
</dbReference>
<dbReference type="AGR" id="HGNC:9661"/>
<dbReference type="CTD" id="5780"/>
<dbReference type="DisGeNET" id="5780"/>
<dbReference type="GeneCards" id="PTPN9"/>
<dbReference type="HGNC" id="HGNC:9661">
    <property type="gene designation" value="PTPN9"/>
</dbReference>
<dbReference type="HPA" id="ENSG00000169410">
    <property type="expression patterns" value="Low tissue specificity"/>
</dbReference>
<dbReference type="MIM" id="600768">
    <property type="type" value="gene"/>
</dbReference>
<dbReference type="neXtProt" id="NX_P43378"/>
<dbReference type="OpenTargets" id="ENSG00000169410"/>
<dbReference type="PharmGKB" id="PA34005"/>
<dbReference type="VEuPathDB" id="HostDB:ENSG00000169410"/>
<dbReference type="eggNOG" id="ENOG502QR81">
    <property type="taxonomic scope" value="Eukaryota"/>
</dbReference>
<dbReference type="GeneTree" id="ENSGT00940000157447"/>
<dbReference type="InParanoid" id="P43378"/>
<dbReference type="OMA" id="DLASWNF"/>
<dbReference type="OrthoDB" id="10051650at2759"/>
<dbReference type="PAN-GO" id="P43378">
    <property type="GO annotations" value="2 GO annotations based on evolutionary models"/>
</dbReference>
<dbReference type="PhylomeDB" id="P43378"/>
<dbReference type="TreeFam" id="TF351975"/>
<dbReference type="BRENDA" id="3.1.3.48">
    <property type="organism ID" value="2681"/>
</dbReference>
<dbReference type="PathwayCommons" id="P43378"/>
<dbReference type="Reactome" id="R-HSA-9008059">
    <property type="pathway name" value="Interleukin-37 signaling"/>
</dbReference>
<dbReference type="SignaLink" id="P43378"/>
<dbReference type="SIGNOR" id="P43378"/>
<dbReference type="BioGRID-ORCS" id="5780">
    <property type="hits" value="21 hits in 1174 CRISPR screens"/>
</dbReference>
<dbReference type="CD-CODE" id="91857CE7">
    <property type="entry name" value="Nucleolus"/>
</dbReference>
<dbReference type="ChiTaRS" id="PTPN9">
    <property type="organism name" value="human"/>
</dbReference>
<dbReference type="EvolutionaryTrace" id="P43378"/>
<dbReference type="GeneWiki" id="PTPN9"/>
<dbReference type="GenomeRNAi" id="5780"/>
<dbReference type="Pharos" id="P43378">
    <property type="development level" value="Tchem"/>
</dbReference>
<dbReference type="PRO" id="PR:P43378"/>
<dbReference type="Proteomes" id="UP000005640">
    <property type="component" value="Chromosome 15"/>
</dbReference>
<dbReference type="RNAct" id="P43378">
    <property type="molecule type" value="protein"/>
</dbReference>
<dbReference type="Bgee" id="ENSG00000169410">
    <property type="expression patterns" value="Expressed in ventricular zone and 165 other cell types or tissues"/>
</dbReference>
<dbReference type="ExpressionAtlas" id="P43378">
    <property type="expression patterns" value="baseline and differential"/>
</dbReference>
<dbReference type="GO" id="GO:0005737">
    <property type="term" value="C:cytoplasm"/>
    <property type="evidence" value="ECO:0000314"/>
    <property type="project" value="UniProtKB"/>
</dbReference>
<dbReference type="GO" id="GO:0044306">
    <property type="term" value="C:neuron projection terminus"/>
    <property type="evidence" value="ECO:0000314"/>
    <property type="project" value="MGI"/>
</dbReference>
<dbReference type="GO" id="GO:0005654">
    <property type="term" value="C:nucleoplasm"/>
    <property type="evidence" value="ECO:0000304"/>
    <property type="project" value="Reactome"/>
</dbReference>
<dbReference type="GO" id="GO:0004726">
    <property type="term" value="F:non-membrane spanning protein tyrosine phosphatase activity"/>
    <property type="evidence" value="ECO:0000304"/>
    <property type="project" value="ProtInc"/>
</dbReference>
<dbReference type="GO" id="GO:0004725">
    <property type="term" value="F:protein tyrosine phosphatase activity"/>
    <property type="evidence" value="ECO:0000314"/>
    <property type="project" value="UniProtKB"/>
</dbReference>
<dbReference type="GO" id="GO:0010977">
    <property type="term" value="P:negative regulation of neuron projection development"/>
    <property type="evidence" value="ECO:0000314"/>
    <property type="project" value="MGI"/>
</dbReference>
<dbReference type="GO" id="GO:0035335">
    <property type="term" value="P:peptidyl-tyrosine dephosphorylation"/>
    <property type="evidence" value="ECO:0000314"/>
    <property type="project" value="MGI"/>
</dbReference>
<dbReference type="GO" id="GO:1903078">
    <property type="term" value="P:positive regulation of protein localization to plasma membrane"/>
    <property type="evidence" value="ECO:0000314"/>
    <property type="project" value="MGI"/>
</dbReference>
<dbReference type="GO" id="GO:0006470">
    <property type="term" value="P:protein dephosphorylation"/>
    <property type="evidence" value="ECO:0000304"/>
    <property type="project" value="ProtInc"/>
</dbReference>
<dbReference type="GO" id="GO:0007165">
    <property type="term" value="P:signal transduction"/>
    <property type="evidence" value="ECO:0000318"/>
    <property type="project" value="GO_Central"/>
</dbReference>
<dbReference type="CDD" id="cd14543">
    <property type="entry name" value="PTPc-N9"/>
    <property type="match status" value="1"/>
</dbReference>
<dbReference type="CDD" id="cd00170">
    <property type="entry name" value="SEC14"/>
    <property type="match status" value="1"/>
</dbReference>
<dbReference type="FunFam" id="3.40.525.10:FF:000005">
    <property type="entry name" value="Tyrosine-protein phosphatase non-receptor type 9"/>
    <property type="match status" value="1"/>
</dbReference>
<dbReference type="FunFam" id="3.90.190.10:FF:000026">
    <property type="entry name" value="tyrosine-protein phosphatase non-receptor type 9"/>
    <property type="match status" value="1"/>
</dbReference>
<dbReference type="Gene3D" id="3.40.525.10">
    <property type="entry name" value="CRAL-TRIO lipid binding domain"/>
    <property type="match status" value="1"/>
</dbReference>
<dbReference type="Gene3D" id="1.10.8.20">
    <property type="entry name" value="N-terminal domain of phosphatidylinositol transfer protein sec14p"/>
    <property type="match status" value="1"/>
</dbReference>
<dbReference type="Gene3D" id="3.90.190.10">
    <property type="entry name" value="Protein tyrosine phosphatase superfamily"/>
    <property type="match status" value="1"/>
</dbReference>
<dbReference type="InterPro" id="IPR001251">
    <property type="entry name" value="CRAL-TRIO_dom"/>
</dbReference>
<dbReference type="InterPro" id="IPR036865">
    <property type="entry name" value="CRAL-TRIO_dom_sf"/>
</dbReference>
<dbReference type="InterPro" id="IPR011074">
    <property type="entry name" value="CRAL/TRIO_N_dom"/>
</dbReference>
<dbReference type="InterPro" id="IPR036273">
    <property type="entry name" value="CRAL/TRIO_N_dom_sf"/>
</dbReference>
<dbReference type="InterPro" id="IPR029021">
    <property type="entry name" value="Prot-tyrosine_phosphatase-like"/>
</dbReference>
<dbReference type="InterPro" id="IPR050348">
    <property type="entry name" value="Protein-Tyr_Phosphatase"/>
</dbReference>
<dbReference type="InterPro" id="IPR000242">
    <property type="entry name" value="PTP_cat"/>
</dbReference>
<dbReference type="InterPro" id="IPR016130">
    <property type="entry name" value="Tyr_Pase_AS"/>
</dbReference>
<dbReference type="InterPro" id="IPR003595">
    <property type="entry name" value="Tyr_Pase_cat"/>
</dbReference>
<dbReference type="InterPro" id="IPR000387">
    <property type="entry name" value="Tyr_Pase_dom"/>
</dbReference>
<dbReference type="PANTHER" id="PTHR19134">
    <property type="entry name" value="RECEPTOR-TYPE TYROSINE-PROTEIN PHOSPHATASE"/>
    <property type="match status" value="1"/>
</dbReference>
<dbReference type="PANTHER" id="PTHR19134:SF285">
    <property type="entry name" value="TYROSINE-PROTEIN PHOSPHATASE NON-RECEPTOR TYPE 9"/>
    <property type="match status" value="1"/>
</dbReference>
<dbReference type="Pfam" id="PF00650">
    <property type="entry name" value="CRAL_TRIO"/>
    <property type="match status" value="1"/>
</dbReference>
<dbReference type="Pfam" id="PF00102">
    <property type="entry name" value="Y_phosphatase"/>
    <property type="match status" value="1"/>
</dbReference>
<dbReference type="PRINTS" id="PR00700">
    <property type="entry name" value="PRTYPHPHTASE"/>
</dbReference>
<dbReference type="SMART" id="SM01100">
    <property type="entry name" value="CRAL_TRIO_N"/>
    <property type="match status" value="1"/>
</dbReference>
<dbReference type="SMART" id="SM00194">
    <property type="entry name" value="PTPc"/>
    <property type="match status" value="1"/>
</dbReference>
<dbReference type="SMART" id="SM00404">
    <property type="entry name" value="PTPc_motif"/>
    <property type="match status" value="1"/>
</dbReference>
<dbReference type="SMART" id="SM00516">
    <property type="entry name" value="SEC14"/>
    <property type="match status" value="1"/>
</dbReference>
<dbReference type="SUPFAM" id="SSF52799">
    <property type="entry name" value="(Phosphotyrosine protein) phosphatases II"/>
    <property type="match status" value="1"/>
</dbReference>
<dbReference type="SUPFAM" id="SSF52087">
    <property type="entry name" value="CRAL/TRIO domain"/>
    <property type="match status" value="1"/>
</dbReference>
<dbReference type="SUPFAM" id="SSF46938">
    <property type="entry name" value="CRAL/TRIO N-terminal domain"/>
    <property type="match status" value="1"/>
</dbReference>
<dbReference type="PROSITE" id="PS50191">
    <property type="entry name" value="CRAL_TRIO"/>
    <property type="match status" value="1"/>
</dbReference>
<dbReference type="PROSITE" id="PS00383">
    <property type="entry name" value="TYR_PHOSPHATASE_1"/>
    <property type="match status" value="1"/>
</dbReference>
<dbReference type="PROSITE" id="PS50056">
    <property type="entry name" value="TYR_PHOSPHATASE_2"/>
    <property type="match status" value="1"/>
</dbReference>
<dbReference type="PROSITE" id="PS50055">
    <property type="entry name" value="TYR_PHOSPHATASE_PTP"/>
    <property type="match status" value="1"/>
</dbReference>